<protein>
    <recommendedName>
        <fullName>Uncharacterized protein C24B11.07c</fullName>
    </recommendedName>
</protein>
<accession>Q09894</accession>
<dbReference type="EMBL" id="CU329670">
    <property type="protein sequence ID" value="CAA91772.1"/>
    <property type="molecule type" value="Genomic_DNA"/>
</dbReference>
<dbReference type="PIR" id="S62552">
    <property type="entry name" value="S62552"/>
</dbReference>
<dbReference type="RefSeq" id="NP_592844.1">
    <property type="nucleotide sequence ID" value="NM_001018245.2"/>
</dbReference>
<dbReference type="SMR" id="Q09894"/>
<dbReference type="BioGRID" id="278060">
    <property type="interactions" value="6"/>
</dbReference>
<dbReference type="FunCoup" id="Q09894">
    <property type="interactions" value="375"/>
</dbReference>
<dbReference type="iPTMnet" id="Q09894"/>
<dbReference type="PaxDb" id="4896-SPAC24B11.07c.1"/>
<dbReference type="EnsemblFungi" id="SPAC24B11.07c.1">
    <property type="protein sequence ID" value="SPAC24B11.07c.1:pep"/>
    <property type="gene ID" value="SPAC24B11.07c"/>
</dbReference>
<dbReference type="KEGG" id="spo:2541561"/>
<dbReference type="PomBase" id="SPAC24B11.07c"/>
<dbReference type="VEuPathDB" id="FungiDB:SPAC24B11.07c"/>
<dbReference type="eggNOG" id="ENOG502QT3Z">
    <property type="taxonomic scope" value="Eukaryota"/>
</dbReference>
<dbReference type="HOGENOM" id="CLU_485839_0_0_1"/>
<dbReference type="InParanoid" id="Q09894"/>
<dbReference type="OMA" id="CIVYNTT"/>
<dbReference type="PhylomeDB" id="Q09894"/>
<dbReference type="PRO" id="PR:Q09894"/>
<dbReference type="Proteomes" id="UP000002485">
    <property type="component" value="Chromosome I"/>
</dbReference>
<dbReference type="GO" id="GO:0032153">
    <property type="term" value="C:cell division site"/>
    <property type="evidence" value="ECO:0007005"/>
    <property type="project" value="PomBase"/>
</dbReference>
<dbReference type="GO" id="GO:0051286">
    <property type="term" value="C:cell tip"/>
    <property type="evidence" value="ECO:0007005"/>
    <property type="project" value="PomBase"/>
</dbReference>
<dbReference type="GO" id="GO:0005737">
    <property type="term" value="C:cytoplasm"/>
    <property type="evidence" value="ECO:0007005"/>
    <property type="project" value="PomBase"/>
</dbReference>
<dbReference type="Gene3D" id="1.10.1040.10">
    <property type="entry name" value="N-(1-d-carboxylethyl)-l-norvaline Dehydrogenase, domain 2"/>
    <property type="match status" value="1"/>
</dbReference>
<dbReference type="Gene3D" id="3.40.50.720">
    <property type="entry name" value="NAD(P)-binding Rossmann-like Domain"/>
    <property type="match status" value="1"/>
</dbReference>
<dbReference type="InterPro" id="IPR008927">
    <property type="entry name" value="6-PGluconate_DH-like_C_sf"/>
</dbReference>
<dbReference type="InterPro" id="IPR013328">
    <property type="entry name" value="6PGD_dom2"/>
</dbReference>
<dbReference type="InterPro" id="IPR013752">
    <property type="entry name" value="KPA_reductase"/>
</dbReference>
<dbReference type="InterPro" id="IPR051402">
    <property type="entry name" value="KPR-Related"/>
</dbReference>
<dbReference type="InterPro" id="IPR013332">
    <property type="entry name" value="KPR_N"/>
</dbReference>
<dbReference type="PANTHER" id="PTHR21708">
    <property type="entry name" value="PROBABLE 2-DEHYDROPANTOATE 2-REDUCTASE"/>
    <property type="match status" value="1"/>
</dbReference>
<dbReference type="PANTHER" id="PTHR21708:SF25">
    <property type="entry name" value="PROTEIN PAM1-RELATED"/>
    <property type="match status" value="1"/>
</dbReference>
<dbReference type="Pfam" id="PF02558">
    <property type="entry name" value="ApbA"/>
    <property type="match status" value="1"/>
</dbReference>
<dbReference type="Pfam" id="PF08546">
    <property type="entry name" value="ApbA_C"/>
    <property type="match status" value="1"/>
</dbReference>
<dbReference type="SUPFAM" id="SSF48179">
    <property type="entry name" value="6-phosphogluconate dehydrogenase C-terminal domain-like"/>
    <property type="match status" value="1"/>
</dbReference>
<proteinExistence type="evidence at protein level"/>
<gene>
    <name type="ORF">SPAC24B11.07c</name>
</gene>
<reference key="1">
    <citation type="journal article" date="2002" name="Nature">
        <title>The genome sequence of Schizosaccharomyces pombe.</title>
        <authorList>
            <person name="Wood V."/>
            <person name="Gwilliam R."/>
            <person name="Rajandream M.A."/>
            <person name="Lyne M.H."/>
            <person name="Lyne R."/>
            <person name="Stewart A."/>
            <person name="Sgouros J.G."/>
            <person name="Peat N."/>
            <person name="Hayles J."/>
            <person name="Baker S.G."/>
            <person name="Basham D."/>
            <person name="Bowman S."/>
            <person name="Brooks K."/>
            <person name="Brown D."/>
            <person name="Brown S."/>
            <person name="Chillingworth T."/>
            <person name="Churcher C.M."/>
            <person name="Collins M."/>
            <person name="Connor R."/>
            <person name="Cronin A."/>
            <person name="Davis P."/>
            <person name="Feltwell T."/>
            <person name="Fraser A."/>
            <person name="Gentles S."/>
            <person name="Goble A."/>
            <person name="Hamlin N."/>
            <person name="Harris D.E."/>
            <person name="Hidalgo J."/>
            <person name="Hodgson G."/>
            <person name="Holroyd S."/>
            <person name="Hornsby T."/>
            <person name="Howarth S."/>
            <person name="Huckle E.J."/>
            <person name="Hunt S."/>
            <person name="Jagels K."/>
            <person name="James K.D."/>
            <person name="Jones L."/>
            <person name="Jones M."/>
            <person name="Leather S."/>
            <person name="McDonald S."/>
            <person name="McLean J."/>
            <person name="Mooney P."/>
            <person name="Moule S."/>
            <person name="Mungall K.L."/>
            <person name="Murphy L.D."/>
            <person name="Niblett D."/>
            <person name="Odell C."/>
            <person name="Oliver K."/>
            <person name="O'Neil S."/>
            <person name="Pearson D."/>
            <person name="Quail M.A."/>
            <person name="Rabbinowitsch E."/>
            <person name="Rutherford K.M."/>
            <person name="Rutter S."/>
            <person name="Saunders D."/>
            <person name="Seeger K."/>
            <person name="Sharp S."/>
            <person name="Skelton J."/>
            <person name="Simmonds M.N."/>
            <person name="Squares R."/>
            <person name="Squares S."/>
            <person name="Stevens K."/>
            <person name="Taylor K."/>
            <person name="Taylor R.G."/>
            <person name="Tivey A."/>
            <person name="Walsh S.V."/>
            <person name="Warren T."/>
            <person name="Whitehead S."/>
            <person name="Woodward J.R."/>
            <person name="Volckaert G."/>
            <person name="Aert R."/>
            <person name="Robben J."/>
            <person name="Grymonprez B."/>
            <person name="Weltjens I."/>
            <person name="Vanstreels E."/>
            <person name="Rieger M."/>
            <person name="Schaefer M."/>
            <person name="Mueller-Auer S."/>
            <person name="Gabel C."/>
            <person name="Fuchs M."/>
            <person name="Duesterhoeft A."/>
            <person name="Fritzc C."/>
            <person name="Holzer E."/>
            <person name="Moestl D."/>
            <person name="Hilbert H."/>
            <person name="Borzym K."/>
            <person name="Langer I."/>
            <person name="Beck A."/>
            <person name="Lehrach H."/>
            <person name="Reinhardt R."/>
            <person name="Pohl T.M."/>
            <person name="Eger P."/>
            <person name="Zimmermann W."/>
            <person name="Wedler H."/>
            <person name="Wambutt R."/>
            <person name="Purnelle B."/>
            <person name="Goffeau A."/>
            <person name="Cadieu E."/>
            <person name="Dreano S."/>
            <person name="Gloux S."/>
            <person name="Lelaure V."/>
            <person name="Mottier S."/>
            <person name="Galibert F."/>
            <person name="Aves S.J."/>
            <person name="Xiang Z."/>
            <person name="Hunt C."/>
            <person name="Moore K."/>
            <person name="Hurst S.M."/>
            <person name="Lucas M."/>
            <person name="Rochet M."/>
            <person name="Gaillardin C."/>
            <person name="Tallada V.A."/>
            <person name="Garzon A."/>
            <person name="Thode G."/>
            <person name="Daga R.R."/>
            <person name="Cruzado L."/>
            <person name="Jimenez J."/>
            <person name="Sanchez M."/>
            <person name="del Rey F."/>
            <person name="Benito J."/>
            <person name="Dominguez A."/>
            <person name="Revuelta J.L."/>
            <person name="Moreno S."/>
            <person name="Armstrong J."/>
            <person name="Forsburg S.L."/>
            <person name="Cerutti L."/>
            <person name="Lowe T."/>
            <person name="McCombie W.R."/>
            <person name="Paulsen I."/>
            <person name="Potashkin J."/>
            <person name="Shpakovski G.V."/>
            <person name="Ussery D."/>
            <person name="Barrell B.G."/>
            <person name="Nurse P."/>
        </authorList>
    </citation>
    <scope>NUCLEOTIDE SEQUENCE [LARGE SCALE GENOMIC DNA]</scope>
    <source>
        <strain>972 / ATCC 24843</strain>
    </source>
</reference>
<reference key="2">
    <citation type="journal article" date="2008" name="J. Proteome Res.">
        <title>Phosphoproteome analysis of fission yeast.</title>
        <authorList>
            <person name="Wilson-Grady J.T."/>
            <person name="Villen J."/>
            <person name="Gygi S.P."/>
        </authorList>
    </citation>
    <scope>PHOSPHORYLATION [LARGE SCALE ANALYSIS] AT SER-383</scope>
    <scope>IDENTIFICATION BY MASS SPECTROMETRY</scope>
</reference>
<keyword id="KW-0597">Phosphoprotein</keyword>
<keyword id="KW-1185">Reference proteome</keyword>
<feature type="chain" id="PRO_0000116433" description="Uncharacterized protein C24B11.07c">
    <location>
        <begin position="1"/>
        <end position="561"/>
    </location>
</feature>
<feature type="region of interest" description="Disordered" evidence="1">
    <location>
        <begin position="369"/>
        <end position="390"/>
    </location>
</feature>
<feature type="region of interest" description="Disordered" evidence="1">
    <location>
        <begin position="429"/>
        <end position="515"/>
    </location>
</feature>
<feature type="compositionally biased region" description="Polar residues" evidence="1">
    <location>
        <begin position="465"/>
        <end position="503"/>
    </location>
</feature>
<feature type="modified residue" description="Phosphoserine" evidence="2">
    <location>
        <position position="383"/>
    </location>
</feature>
<evidence type="ECO:0000256" key="1">
    <source>
        <dbReference type="SAM" id="MobiDB-lite"/>
    </source>
</evidence>
<evidence type="ECO:0000269" key="2">
    <source>
    </source>
</evidence>
<organism>
    <name type="scientific">Schizosaccharomyces pombe (strain 972 / ATCC 24843)</name>
    <name type="common">Fission yeast</name>
    <dbReference type="NCBI Taxonomy" id="284812"/>
    <lineage>
        <taxon>Eukaryota</taxon>
        <taxon>Fungi</taxon>
        <taxon>Dikarya</taxon>
        <taxon>Ascomycota</taxon>
        <taxon>Taphrinomycotina</taxon>
        <taxon>Schizosaccharomycetes</taxon>
        <taxon>Schizosaccharomycetales</taxon>
        <taxon>Schizosaccharomycetaceae</taxon>
        <taxon>Schizosaccharomyces</taxon>
    </lineage>
</organism>
<name>YAI7_SCHPO</name>
<sequence>MTDAGKKERVSILCVGSPSITTLLGWRLQQSSVVTCQETIMFFNAPEPSTNVFTIQSKKFGTRKYRPTYRLSKLEEVTSDSEPFDYVFVSIKPNSRNFQLSNILEPVITAKHTCIVYNSTGAIGVEEALQRQYPENPIFSLITHTPVSQRSVDEFFFGDCAPFYLAPAGSNLEIDQLSRLVEILEGGEISSEILDTLLPLEIEDLALPLSLYPLTVLTQNPNLPKLLERPDINDLHQGILQELDSLCNCLGSSLDVKKLSKQRETLLSHMQVNPAFREYRSNRPVEIVQYLHYCIDLATKQSLQVPRLRTISALISSIQHLPLVQPHHMNDMHGPTDNSPKKNKVLVNMRPINPSSFVSDRHSPLHPYSVPENGKPNMGRIPSAPSLSKGRAMTADNMDMLSLTTRRSRRSLYSPSLMQMQQSLKSDYEGLGRTFDPRFAPRGSPPVRGGKNVLSPEAKEHTHKNISPESSRFGTPSDPNSSSQSLGNEVLSRPNSNSNSAESRNGETDDSGESETYFTLMNNNKGVEPRASVASETSSMTVIPNAMRRFPLARGTSRMKS</sequence>